<feature type="signal peptide" evidence="1">
    <location>
        <begin position="1"/>
        <end position="15"/>
    </location>
</feature>
<feature type="chain" id="PRO_0000236826" description="Flagellar L-ring protein">
    <location>
        <begin position="16"/>
        <end position="227"/>
    </location>
</feature>
<feature type="lipid moiety-binding region" description="N-palmitoyl cysteine" evidence="1">
    <location>
        <position position="16"/>
    </location>
</feature>
<feature type="lipid moiety-binding region" description="S-diacylglycerol cysteine" evidence="1">
    <location>
        <position position="16"/>
    </location>
</feature>
<evidence type="ECO:0000255" key="1">
    <source>
        <dbReference type="HAMAP-Rule" id="MF_00415"/>
    </source>
</evidence>
<evidence type="ECO:0000305" key="2"/>
<name>FLGH_SYNC1</name>
<gene>
    <name evidence="1" type="primary">flgH</name>
    <name type="ordered locus">Pcar_1154</name>
</gene>
<accession>Q3A5F4</accession>
<protein>
    <recommendedName>
        <fullName evidence="1">Flagellar L-ring protein</fullName>
    </recommendedName>
    <alternativeName>
        <fullName evidence="1">Basal body L-ring protein</fullName>
    </alternativeName>
</protein>
<proteinExistence type="inferred from homology"/>
<keyword id="KW-0975">Bacterial flagellum</keyword>
<keyword id="KW-0998">Cell outer membrane</keyword>
<keyword id="KW-0449">Lipoprotein</keyword>
<keyword id="KW-0472">Membrane</keyword>
<keyword id="KW-0564">Palmitate</keyword>
<keyword id="KW-1185">Reference proteome</keyword>
<keyword id="KW-0732">Signal</keyword>
<sequence length="227" mass="24595">MRTWAVLPILLMLVGCVTQRIVEPQPHSAPIAARQVQPEQPQAPGSLWTEGRGSLFRDNKARRVGDIVTVAIYEQASASKQASTATGRSSSMSAGLTNLFGIEGNIGNLNKFIDPTSLIDTSYENAFDGSGSTSRKEDLVATLTAQVIEELPNGNLCIAGGKTVTVNREDQIILLEGIIRPEDISARNVVSSKHILDAKIAYTGKGVISDKQRPGWMTRVLDHIWPF</sequence>
<organism>
    <name type="scientific">Syntrophotalea carbinolica (strain DSM 2380 / NBRC 103641 / GraBd1)</name>
    <name type="common">Pelobacter carbinolicus</name>
    <dbReference type="NCBI Taxonomy" id="338963"/>
    <lineage>
        <taxon>Bacteria</taxon>
        <taxon>Pseudomonadati</taxon>
        <taxon>Thermodesulfobacteriota</taxon>
        <taxon>Desulfuromonadia</taxon>
        <taxon>Desulfuromonadales</taxon>
        <taxon>Syntrophotaleaceae</taxon>
        <taxon>Syntrophotalea</taxon>
    </lineage>
</organism>
<comment type="function">
    <text evidence="1">Assembles around the rod to form the L-ring and probably protects the motor/basal body from shearing forces during rotation.</text>
</comment>
<comment type="subunit">
    <text evidence="1">The basal body constitutes a major portion of the flagellar organelle and consists of four rings (L,P,S, and M) mounted on a central rod.</text>
</comment>
<comment type="subcellular location">
    <subcellularLocation>
        <location evidence="1">Cell outer membrane</location>
        <topology evidence="1">Lipid-anchor</topology>
    </subcellularLocation>
    <subcellularLocation>
        <location evidence="1">Bacterial flagellum basal body</location>
    </subcellularLocation>
</comment>
<comment type="similarity">
    <text evidence="1">Belongs to the FlgH family.</text>
</comment>
<comment type="sequence caution" evidence="2">
    <conflict type="erroneous initiation">
        <sequence resource="EMBL-CDS" id="ABA88403"/>
    </conflict>
</comment>
<reference key="1">
    <citation type="submission" date="2005-10" db="EMBL/GenBank/DDBJ databases">
        <title>Complete sequence of Pelobacter carbinolicus DSM 2380.</title>
        <authorList>
            <person name="Copeland A."/>
            <person name="Lucas S."/>
            <person name="Lapidus A."/>
            <person name="Barry K."/>
            <person name="Detter J.C."/>
            <person name="Glavina T."/>
            <person name="Hammon N."/>
            <person name="Israni S."/>
            <person name="Pitluck S."/>
            <person name="Chertkov O."/>
            <person name="Schmutz J."/>
            <person name="Larimer F."/>
            <person name="Land M."/>
            <person name="Kyrpides N."/>
            <person name="Ivanova N."/>
            <person name="Richardson P."/>
        </authorList>
    </citation>
    <scope>NUCLEOTIDE SEQUENCE [LARGE SCALE GENOMIC DNA]</scope>
    <source>
        <strain>DSM 2380 / NBRC 103641 / GraBd1</strain>
    </source>
</reference>
<dbReference type="EMBL" id="CP000142">
    <property type="protein sequence ID" value="ABA88403.1"/>
    <property type="status" value="ALT_INIT"/>
    <property type="molecule type" value="Genomic_DNA"/>
</dbReference>
<dbReference type="RefSeq" id="WP_011340872.1">
    <property type="nucleotide sequence ID" value="NC_007498.2"/>
</dbReference>
<dbReference type="STRING" id="338963.Pcar_1154"/>
<dbReference type="KEGG" id="pca:Pcar_1154"/>
<dbReference type="eggNOG" id="COG2063">
    <property type="taxonomic scope" value="Bacteria"/>
</dbReference>
<dbReference type="HOGENOM" id="CLU_069313_1_1_7"/>
<dbReference type="OrthoDB" id="9789227at2"/>
<dbReference type="Proteomes" id="UP000002534">
    <property type="component" value="Chromosome"/>
</dbReference>
<dbReference type="GO" id="GO:0009427">
    <property type="term" value="C:bacterial-type flagellum basal body, distal rod, L ring"/>
    <property type="evidence" value="ECO:0007669"/>
    <property type="project" value="InterPro"/>
</dbReference>
<dbReference type="GO" id="GO:0009279">
    <property type="term" value="C:cell outer membrane"/>
    <property type="evidence" value="ECO:0007669"/>
    <property type="project" value="UniProtKB-SubCell"/>
</dbReference>
<dbReference type="GO" id="GO:0003774">
    <property type="term" value="F:cytoskeletal motor activity"/>
    <property type="evidence" value="ECO:0007669"/>
    <property type="project" value="InterPro"/>
</dbReference>
<dbReference type="GO" id="GO:0071973">
    <property type="term" value="P:bacterial-type flagellum-dependent cell motility"/>
    <property type="evidence" value="ECO:0007669"/>
    <property type="project" value="InterPro"/>
</dbReference>
<dbReference type="HAMAP" id="MF_00415">
    <property type="entry name" value="FlgH"/>
    <property type="match status" value="1"/>
</dbReference>
<dbReference type="InterPro" id="IPR000527">
    <property type="entry name" value="Flag_Lring"/>
</dbReference>
<dbReference type="PANTHER" id="PTHR34933">
    <property type="entry name" value="FLAGELLAR L-RING PROTEIN"/>
    <property type="match status" value="1"/>
</dbReference>
<dbReference type="PANTHER" id="PTHR34933:SF1">
    <property type="entry name" value="FLAGELLAR L-RING PROTEIN"/>
    <property type="match status" value="1"/>
</dbReference>
<dbReference type="Pfam" id="PF02107">
    <property type="entry name" value="FlgH"/>
    <property type="match status" value="1"/>
</dbReference>
<dbReference type="PRINTS" id="PR01008">
    <property type="entry name" value="FLGLRINGFLGH"/>
</dbReference>
<dbReference type="PROSITE" id="PS51257">
    <property type="entry name" value="PROKAR_LIPOPROTEIN"/>
    <property type="match status" value="1"/>
</dbReference>